<feature type="chain" id="PRO_1000184187" description="Phosphonoacetaldehyde hydrolase">
    <location>
        <begin position="1"/>
        <end position="264"/>
    </location>
</feature>
<feature type="active site" description="Nucleophile" evidence="1">
    <location>
        <position position="9"/>
    </location>
</feature>
<feature type="active site" description="Schiff-base intermediate with substrate" evidence="1">
    <location>
        <position position="50"/>
    </location>
</feature>
<feature type="binding site" evidence="1">
    <location>
        <position position="9"/>
    </location>
    <ligand>
        <name>Mg(2+)</name>
        <dbReference type="ChEBI" id="CHEBI:18420"/>
    </ligand>
</feature>
<feature type="binding site" evidence="1">
    <location>
        <position position="11"/>
    </location>
    <ligand>
        <name>Mg(2+)</name>
        <dbReference type="ChEBI" id="CHEBI:18420"/>
    </ligand>
</feature>
<feature type="binding site" evidence="1">
    <location>
        <position position="183"/>
    </location>
    <ligand>
        <name>Mg(2+)</name>
        <dbReference type="ChEBI" id="CHEBI:18420"/>
    </ligand>
</feature>
<organism>
    <name type="scientific">Bacillus cereus (strain Q1)</name>
    <dbReference type="NCBI Taxonomy" id="361100"/>
    <lineage>
        <taxon>Bacteria</taxon>
        <taxon>Bacillati</taxon>
        <taxon>Bacillota</taxon>
        <taxon>Bacilli</taxon>
        <taxon>Bacillales</taxon>
        <taxon>Bacillaceae</taxon>
        <taxon>Bacillus</taxon>
        <taxon>Bacillus cereus group</taxon>
    </lineage>
</organism>
<comment type="function">
    <text evidence="1">Involved in phosphonate degradation.</text>
</comment>
<comment type="catalytic activity">
    <reaction evidence="1">
        <text>phosphonoacetaldehyde + H2O = acetaldehyde + phosphate + H(+)</text>
        <dbReference type="Rhea" id="RHEA:18905"/>
        <dbReference type="ChEBI" id="CHEBI:15343"/>
        <dbReference type="ChEBI" id="CHEBI:15377"/>
        <dbReference type="ChEBI" id="CHEBI:15378"/>
        <dbReference type="ChEBI" id="CHEBI:43474"/>
        <dbReference type="ChEBI" id="CHEBI:58383"/>
        <dbReference type="EC" id="3.11.1.1"/>
    </reaction>
</comment>
<comment type="cofactor">
    <cofactor evidence="1">
        <name>Mg(2+)</name>
        <dbReference type="ChEBI" id="CHEBI:18420"/>
    </cofactor>
    <text evidence="1">Binds 1 Mg(2+) ion per subunit.</text>
</comment>
<comment type="subunit">
    <text evidence="1">Homodimer.</text>
</comment>
<comment type="similarity">
    <text evidence="1">Belongs to the HAD-like hydrolase superfamily. PhnX family.</text>
</comment>
<sequence>MKIEAVIFDWAGTTVDYGCFAPLEVFIKIFRKRGVKITDEEARKPMGLLKIDHVRALTEMPRIANEWERVFGHLPTEADIHEMYEEFEEILFTILPHYATPIDGVKEVVASLRKRGLKIGSTTGYTREMMDIVAKEAEIQGYKPDVLVTPDDVSAGRPYPWMCYKNAMELGVYPMNHMIKVGDTVSDMKEGRNAGMWTVGVILGSSELGLSEWAAETMDPVELREKMEVVRKRFVENGAHFTIETMQGLENVIEQIEKQEFIIS</sequence>
<gene>
    <name evidence="1" type="primary">phnX</name>
    <name type="ordered locus">BCQ_1398</name>
</gene>
<protein>
    <recommendedName>
        <fullName evidence="1">Phosphonoacetaldehyde hydrolase</fullName>
        <shortName evidence="1">Phosphonatase</shortName>
        <ecNumber evidence="1">3.11.1.1</ecNumber>
    </recommendedName>
    <alternativeName>
        <fullName evidence="1">Phosphonoacetaldehyde phosphonohydrolase</fullName>
    </alternativeName>
</protein>
<reference key="1">
    <citation type="journal article" date="2009" name="J. Bacteriol.">
        <title>Complete genome sequence of the extremophilic Bacillus cereus strain Q1 with industrial applications.</title>
        <authorList>
            <person name="Xiong Z."/>
            <person name="Jiang Y."/>
            <person name="Qi D."/>
            <person name="Lu H."/>
            <person name="Yang F."/>
            <person name="Yang J."/>
            <person name="Chen L."/>
            <person name="Sun L."/>
            <person name="Xu X."/>
            <person name="Xue Y."/>
            <person name="Zhu Y."/>
            <person name="Jin Q."/>
        </authorList>
    </citation>
    <scope>NUCLEOTIDE SEQUENCE [LARGE SCALE GENOMIC DNA]</scope>
    <source>
        <strain>Q1</strain>
    </source>
</reference>
<accession>B9IUR5</accession>
<evidence type="ECO:0000255" key="1">
    <source>
        <dbReference type="HAMAP-Rule" id="MF_01375"/>
    </source>
</evidence>
<name>PHNX_BACCQ</name>
<keyword id="KW-0378">Hydrolase</keyword>
<keyword id="KW-0460">Magnesium</keyword>
<keyword id="KW-0479">Metal-binding</keyword>
<keyword id="KW-0704">Schiff base</keyword>
<dbReference type="EC" id="3.11.1.1" evidence="1"/>
<dbReference type="EMBL" id="CP000227">
    <property type="protein sequence ID" value="ACM11826.1"/>
    <property type="molecule type" value="Genomic_DNA"/>
</dbReference>
<dbReference type="SMR" id="B9IUR5"/>
<dbReference type="KEGG" id="bcq:BCQ_1398"/>
<dbReference type="HOGENOM" id="CLU_045011_12_0_9"/>
<dbReference type="Proteomes" id="UP000000441">
    <property type="component" value="Chromosome"/>
</dbReference>
<dbReference type="GO" id="GO:0005829">
    <property type="term" value="C:cytosol"/>
    <property type="evidence" value="ECO:0007669"/>
    <property type="project" value="TreeGrafter"/>
</dbReference>
<dbReference type="GO" id="GO:0000287">
    <property type="term" value="F:magnesium ion binding"/>
    <property type="evidence" value="ECO:0007669"/>
    <property type="project" value="UniProtKB-UniRule"/>
</dbReference>
<dbReference type="GO" id="GO:0008967">
    <property type="term" value="F:phosphoglycolate phosphatase activity"/>
    <property type="evidence" value="ECO:0007669"/>
    <property type="project" value="TreeGrafter"/>
</dbReference>
<dbReference type="GO" id="GO:0050194">
    <property type="term" value="F:phosphonoacetaldehyde hydrolase activity"/>
    <property type="evidence" value="ECO:0007669"/>
    <property type="project" value="UniProtKB-UniRule"/>
</dbReference>
<dbReference type="GO" id="GO:0006281">
    <property type="term" value="P:DNA repair"/>
    <property type="evidence" value="ECO:0007669"/>
    <property type="project" value="TreeGrafter"/>
</dbReference>
<dbReference type="GO" id="GO:0019700">
    <property type="term" value="P:organic phosphonate catabolic process"/>
    <property type="evidence" value="ECO:0007669"/>
    <property type="project" value="InterPro"/>
</dbReference>
<dbReference type="CDD" id="cd02586">
    <property type="entry name" value="HAD_PHN"/>
    <property type="match status" value="1"/>
</dbReference>
<dbReference type="FunFam" id="1.10.150.240:FF:000006">
    <property type="entry name" value="Phosphonoacetaldehyde hydrolase"/>
    <property type="match status" value="1"/>
</dbReference>
<dbReference type="FunFam" id="3.40.50.1000:FF:000072">
    <property type="entry name" value="Phosphonoacetaldehyde hydrolase"/>
    <property type="match status" value="1"/>
</dbReference>
<dbReference type="Gene3D" id="3.40.50.1000">
    <property type="entry name" value="HAD superfamily/HAD-like"/>
    <property type="match status" value="1"/>
</dbReference>
<dbReference type="Gene3D" id="1.10.150.240">
    <property type="entry name" value="Putative phosphatase, domain 2"/>
    <property type="match status" value="1"/>
</dbReference>
<dbReference type="HAMAP" id="MF_01375">
    <property type="entry name" value="PhnX"/>
    <property type="match status" value="1"/>
</dbReference>
<dbReference type="InterPro" id="IPR050155">
    <property type="entry name" value="HAD-like_hydrolase_sf"/>
</dbReference>
<dbReference type="InterPro" id="IPR036412">
    <property type="entry name" value="HAD-like_sf"/>
</dbReference>
<dbReference type="InterPro" id="IPR006439">
    <property type="entry name" value="HAD-SF_hydro_IA"/>
</dbReference>
<dbReference type="InterPro" id="IPR041492">
    <property type="entry name" value="HAD_2"/>
</dbReference>
<dbReference type="InterPro" id="IPR023214">
    <property type="entry name" value="HAD_sf"/>
</dbReference>
<dbReference type="InterPro" id="IPR023198">
    <property type="entry name" value="PGP-like_dom2"/>
</dbReference>
<dbReference type="InterPro" id="IPR006323">
    <property type="entry name" value="Phosphonoacetald_hydro"/>
</dbReference>
<dbReference type="NCBIfam" id="TIGR01549">
    <property type="entry name" value="HAD-SF-IA-v1"/>
    <property type="match status" value="1"/>
</dbReference>
<dbReference type="NCBIfam" id="TIGR01422">
    <property type="entry name" value="phosphonatase"/>
    <property type="match status" value="1"/>
</dbReference>
<dbReference type="PANTHER" id="PTHR43434">
    <property type="entry name" value="PHOSPHOGLYCOLATE PHOSPHATASE"/>
    <property type="match status" value="1"/>
</dbReference>
<dbReference type="PANTHER" id="PTHR43434:SF19">
    <property type="entry name" value="PHOSPHONOACETALDEHYDE HYDROLASE"/>
    <property type="match status" value="1"/>
</dbReference>
<dbReference type="Pfam" id="PF13419">
    <property type="entry name" value="HAD_2"/>
    <property type="match status" value="1"/>
</dbReference>
<dbReference type="SFLD" id="SFLDG01135">
    <property type="entry name" value="C1.5.6:_HAD__Beta-PGM__Phospha"/>
    <property type="match status" value="1"/>
</dbReference>
<dbReference type="SFLD" id="SFLDF00038">
    <property type="entry name" value="phosphonoacetaldehyde_hydrolas"/>
    <property type="match status" value="1"/>
</dbReference>
<dbReference type="SUPFAM" id="SSF56784">
    <property type="entry name" value="HAD-like"/>
    <property type="match status" value="1"/>
</dbReference>
<proteinExistence type="inferred from homology"/>